<keyword id="KW-0037">Angiogenesis</keyword>
<keyword id="KW-1015">Disulfide bond</keyword>
<keyword id="KW-0325">Glycoprotein</keyword>
<keyword id="KW-0393">Immunoglobulin domain</keyword>
<keyword id="KW-0635">Pregnancy</keyword>
<keyword id="KW-1185">Reference proteome</keyword>
<keyword id="KW-0964">Secreted</keyword>
<keyword id="KW-0732">Signal</keyword>
<protein>
    <recommendedName>
        <fullName evidence="7">Pregnancy-specific glycoprotein 22</fullName>
    </recommendedName>
</protein>
<reference evidence="8" key="1">
    <citation type="journal article" date="2009" name="PLoS Biol.">
        <title>Lineage-specific biology revealed by a finished genome assembly of the mouse.</title>
        <authorList>
            <person name="Church D.M."/>
            <person name="Goodstadt L."/>
            <person name="Hillier L.W."/>
            <person name="Zody M.C."/>
            <person name="Goldstein S."/>
            <person name="She X."/>
            <person name="Bult C.J."/>
            <person name="Agarwala R."/>
            <person name="Cherry J.L."/>
            <person name="DiCuccio M."/>
            <person name="Hlavina W."/>
            <person name="Kapustin Y."/>
            <person name="Meric P."/>
            <person name="Maglott D."/>
            <person name="Birtle Z."/>
            <person name="Marques A.C."/>
            <person name="Graves T."/>
            <person name="Zhou S."/>
            <person name="Teague B."/>
            <person name="Potamousis K."/>
            <person name="Churas C."/>
            <person name="Place M."/>
            <person name="Herschleb J."/>
            <person name="Runnheim R."/>
            <person name="Forrest D."/>
            <person name="Amos-Landgraf J."/>
            <person name="Schwartz D.C."/>
            <person name="Cheng Z."/>
            <person name="Lindblad-Toh K."/>
            <person name="Eichler E.E."/>
            <person name="Ponting C.P."/>
        </authorList>
    </citation>
    <scope>NUCLEOTIDE SEQUENCE [LARGE SCALE GENOMIC DNA]</scope>
    <source>
        <strain evidence="8">C57BL/6J</strain>
    </source>
</reference>
<reference evidence="5" key="2">
    <citation type="journal article" date="2004" name="Genome Res.">
        <title>The status, quality, and expansion of the NIH full-length cDNA project: the Mammalian Gene Collection (MGC).</title>
        <authorList>
            <consortium name="The MGC Project Team"/>
        </authorList>
    </citation>
    <scope>NUCLEOTIDE SEQUENCE [LARGE SCALE MRNA]</scope>
    <source>
        <strain evidence="5">C57BL/6J</strain>
        <tissue evidence="5 6">Embryo</tissue>
    </source>
</reference>
<reference evidence="4" key="3">
    <citation type="journal article" date="2012" name="Biol. Reprod.">
        <title>Early expression of pregnancy-specific glycoprotein 22 (PSG22) by trophoblast cells modulates angiogenesis in mice.</title>
        <authorList>
            <person name="Blois S.M."/>
            <person name="Tirado-Gonzalez I."/>
            <person name="Wu J."/>
            <person name="Barrientos G."/>
            <person name="Johnson B."/>
            <person name="Warren J."/>
            <person name="Freitag N."/>
            <person name="Klapp B.F."/>
            <person name="Irmak S."/>
            <person name="Ergun S."/>
            <person name="Dveskler G.S."/>
        </authorList>
    </citation>
    <scope>FUNCTION</scope>
    <scope>DEVELOPMENTAL STAGE</scope>
</reference>
<proteinExistence type="evidence at protein level"/>
<feature type="signal peptide" evidence="1">
    <location>
        <begin position="1"/>
        <end position="35"/>
    </location>
</feature>
<feature type="chain" id="PRO_0000440673" description="Pregnancy-specific glycoprotein 22">
    <location>
        <begin position="36"/>
        <end position="475"/>
    </location>
</feature>
<feature type="domain" description="Ig-like V-type 1" evidence="1">
    <location>
        <begin position="44"/>
        <end position="140"/>
    </location>
</feature>
<feature type="domain" description="Ig-like V-type 2" evidence="1">
    <location>
        <begin position="162"/>
        <end position="260"/>
    </location>
</feature>
<feature type="domain" description="Ig-like V-type 3" evidence="1">
    <location>
        <begin position="280"/>
        <end position="380"/>
    </location>
</feature>
<feature type="domain" description="Ig-like C2-type" evidence="2">
    <location>
        <begin position="387"/>
        <end position="471"/>
    </location>
</feature>
<feature type="glycosylation site" description="N-linked (GlcNAc...) asparagine" evidence="1">
    <location>
        <position position="103"/>
    </location>
</feature>
<feature type="glycosylation site" description="N-linked (GlcNAc...) asparagine" evidence="1">
    <location>
        <position position="110"/>
    </location>
</feature>
<feature type="glycosylation site" description="N-linked (GlcNAc...) asparagine" evidence="1">
    <location>
        <position position="231"/>
    </location>
</feature>
<feature type="disulfide bond" evidence="2">
    <location>
        <begin position="406"/>
        <end position="454"/>
    </location>
</feature>
<dbReference type="EMBL" id="AC149065">
    <property type="status" value="NOT_ANNOTATED_CDS"/>
    <property type="molecule type" value="Genomic_DNA"/>
</dbReference>
<dbReference type="EMBL" id="BC050099">
    <property type="protein sequence ID" value="AAH50099.2"/>
    <property type="molecule type" value="mRNA"/>
</dbReference>
<dbReference type="EMBL" id="BC080694">
    <property type="protein sequence ID" value="AAH80694.1"/>
    <property type="molecule type" value="mRNA"/>
</dbReference>
<dbReference type="CCDS" id="CCDS20876.1"/>
<dbReference type="RefSeq" id="NP_001004152.1">
    <property type="nucleotide sequence ID" value="NM_001004152.3"/>
</dbReference>
<dbReference type="SMR" id="Q810J1"/>
<dbReference type="FunCoup" id="Q810J1">
    <property type="interactions" value="14"/>
</dbReference>
<dbReference type="STRING" id="10090.ENSMUSP00000146795"/>
<dbReference type="GlyCosmos" id="Q810J1">
    <property type="glycosylation" value="3 sites, No reported glycans"/>
</dbReference>
<dbReference type="GlyGen" id="Q810J1">
    <property type="glycosylation" value="3 sites"/>
</dbReference>
<dbReference type="PaxDb" id="10090-ENSMUSP00000104121"/>
<dbReference type="DNASU" id="243862"/>
<dbReference type="Ensembl" id="ENSMUST00000051973.9">
    <property type="protein sequence ID" value="ENSMUSP00000050633.9"/>
    <property type="gene ID" value="ENSMUSG00000044903.16"/>
</dbReference>
<dbReference type="Ensembl" id="ENSMUST00000208221.2">
    <property type="protein sequence ID" value="ENSMUSP00000146795.2"/>
    <property type="gene ID" value="ENSMUSG00000044903.16"/>
</dbReference>
<dbReference type="GeneID" id="243862"/>
<dbReference type="KEGG" id="mmu:243862"/>
<dbReference type="UCSC" id="uc009fjq.1">
    <property type="organism name" value="mouse"/>
</dbReference>
<dbReference type="AGR" id="MGI:1891354"/>
<dbReference type="CTD" id="243862"/>
<dbReference type="MGI" id="MGI:1891354">
    <property type="gene designation" value="Psg22"/>
</dbReference>
<dbReference type="VEuPathDB" id="HostDB:ENSMUSG00000044903"/>
<dbReference type="eggNOG" id="ENOG502S42Z">
    <property type="taxonomic scope" value="Eukaryota"/>
</dbReference>
<dbReference type="GeneTree" id="ENSGT01100000263479"/>
<dbReference type="InParanoid" id="Q810J1"/>
<dbReference type="OrthoDB" id="54098at9989"/>
<dbReference type="PhylomeDB" id="Q810J1"/>
<dbReference type="Reactome" id="R-MMU-163125">
    <property type="pathway name" value="Post-translational modification: synthesis of GPI-anchored proteins"/>
</dbReference>
<dbReference type="Reactome" id="R-MMU-202733">
    <property type="pathway name" value="Cell surface interactions at the vascular wall"/>
</dbReference>
<dbReference type="Reactome" id="R-MMU-6798695">
    <property type="pathway name" value="Neutrophil degranulation"/>
</dbReference>
<dbReference type="BioGRID-ORCS" id="243862">
    <property type="hits" value="3 hits in 77 CRISPR screens"/>
</dbReference>
<dbReference type="ChiTaRS" id="Psg22">
    <property type="organism name" value="mouse"/>
</dbReference>
<dbReference type="PRO" id="PR:Q810J1"/>
<dbReference type="Proteomes" id="UP000000589">
    <property type="component" value="Chromosome 7"/>
</dbReference>
<dbReference type="RNAct" id="Q810J1">
    <property type="molecule type" value="protein"/>
</dbReference>
<dbReference type="Bgee" id="ENSMUSG00000044903">
    <property type="expression patterns" value="Expressed in ectoplacental cone and 3 other cell types or tissues"/>
</dbReference>
<dbReference type="ExpressionAtlas" id="Q810J1">
    <property type="expression patterns" value="baseline and differential"/>
</dbReference>
<dbReference type="GO" id="GO:0005576">
    <property type="term" value="C:extracellular region"/>
    <property type="evidence" value="ECO:0007669"/>
    <property type="project" value="UniProtKB-SubCell"/>
</dbReference>
<dbReference type="GO" id="GO:0045545">
    <property type="term" value="F:syndecan binding"/>
    <property type="evidence" value="ECO:0000314"/>
    <property type="project" value="MGI"/>
</dbReference>
<dbReference type="GO" id="GO:0001525">
    <property type="term" value="P:angiogenesis"/>
    <property type="evidence" value="ECO:0007669"/>
    <property type="project" value="UniProtKB-KW"/>
</dbReference>
<dbReference type="GO" id="GO:0007565">
    <property type="term" value="P:female pregnancy"/>
    <property type="evidence" value="ECO:0007669"/>
    <property type="project" value="UniProtKB-KW"/>
</dbReference>
<dbReference type="GO" id="GO:0045766">
    <property type="term" value="P:positive regulation of angiogenesis"/>
    <property type="evidence" value="ECO:0000314"/>
    <property type="project" value="MGI"/>
</dbReference>
<dbReference type="GO" id="GO:0001819">
    <property type="term" value="P:positive regulation of cytokine production"/>
    <property type="evidence" value="ECO:0000314"/>
    <property type="project" value="MGI"/>
</dbReference>
<dbReference type="GO" id="GO:0060907">
    <property type="term" value="P:positive regulation of macrophage cytokine production"/>
    <property type="evidence" value="ECO:0000314"/>
    <property type="project" value="MGI"/>
</dbReference>
<dbReference type="GO" id="GO:0071636">
    <property type="term" value="P:positive regulation of transforming growth factor beta production"/>
    <property type="evidence" value="ECO:0000314"/>
    <property type="project" value="MGI"/>
</dbReference>
<dbReference type="GO" id="GO:0071604">
    <property type="term" value="P:transforming growth factor beta production"/>
    <property type="evidence" value="ECO:0000314"/>
    <property type="project" value="MGI"/>
</dbReference>
<dbReference type="CDD" id="cd05740">
    <property type="entry name" value="IgI_hCEACAM_2_4_6_like"/>
    <property type="match status" value="1"/>
</dbReference>
<dbReference type="CDD" id="cd05774">
    <property type="entry name" value="IgV_CEACAM_D1"/>
    <property type="match status" value="3"/>
</dbReference>
<dbReference type="FunFam" id="2.60.40.10:FF:000340">
    <property type="entry name" value="Carcinoembryonic antigen-related cell adhesion molecule 1"/>
    <property type="match status" value="3"/>
</dbReference>
<dbReference type="FunFam" id="2.60.40.10:FF:000244">
    <property type="entry name" value="carcinoembryonic antigen-related cell adhesion molecule 16"/>
    <property type="match status" value="1"/>
</dbReference>
<dbReference type="Gene3D" id="2.60.40.10">
    <property type="entry name" value="Immunoglobulins"/>
    <property type="match status" value="4"/>
</dbReference>
<dbReference type="InterPro" id="IPR050831">
    <property type="entry name" value="CEA_cell_adhesion"/>
</dbReference>
<dbReference type="InterPro" id="IPR007110">
    <property type="entry name" value="Ig-like_dom"/>
</dbReference>
<dbReference type="InterPro" id="IPR036179">
    <property type="entry name" value="Ig-like_dom_sf"/>
</dbReference>
<dbReference type="InterPro" id="IPR013783">
    <property type="entry name" value="Ig-like_fold"/>
</dbReference>
<dbReference type="InterPro" id="IPR003599">
    <property type="entry name" value="Ig_sub"/>
</dbReference>
<dbReference type="InterPro" id="IPR003598">
    <property type="entry name" value="Ig_sub2"/>
</dbReference>
<dbReference type="InterPro" id="IPR013106">
    <property type="entry name" value="Ig_V-set"/>
</dbReference>
<dbReference type="PANTHER" id="PTHR44427:SF1">
    <property type="entry name" value="CARCINOEMBRYONIC ANTIGEN-RELATED CELL ADHESION MOLECULE 1"/>
    <property type="match status" value="1"/>
</dbReference>
<dbReference type="PANTHER" id="PTHR44427">
    <property type="entry name" value="CARCINOEMBRYONIC ANTIGEN-RELATED CELL ADHESION MOLECULE 19"/>
    <property type="match status" value="1"/>
</dbReference>
<dbReference type="Pfam" id="PF13927">
    <property type="entry name" value="Ig_3"/>
    <property type="match status" value="1"/>
</dbReference>
<dbReference type="Pfam" id="PF07686">
    <property type="entry name" value="V-set"/>
    <property type="match status" value="3"/>
</dbReference>
<dbReference type="SMART" id="SM00409">
    <property type="entry name" value="IG"/>
    <property type="match status" value="4"/>
</dbReference>
<dbReference type="SMART" id="SM00408">
    <property type="entry name" value="IGc2"/>
    <property type="match status" value="2"/>
</dbReference>
<dbReference type="SUPFAM" id="SSF48726">
    <property type="entry name" value="Immunoglobulin"/>
    <property type="match status" value="4"/>
</dbReference>
<dbReference type="PROSITE" id="PS50835">
    <property type="entry name" value="IG_LIKE"/>
    <property type="match status" value="1"/>
</dbReference>
<organism evidence="5">
    <name type="scientific">Mus musculus</name>
    <name type="common">Mouse</name>
    <dbReference type="NCBI Taxonomy" id="10090"/>
    <lineage>
        <taxon>Eukaryota</taxon>
        <taxon>Metazoa</taxon>
        <taxon>Chordata</taxon>
        <taxon>Craniata</taxon>
        <taxon>Vertebrata</taxon>
        <taxon>Euteleostomi</taxon>
        <taxon>Mammalia</taxon>
        <taxon>Eutheria</taxon>
        <taxon>Euarchontoglires</taxon>
        <taxon>Glires</taxon>
        <taxon>Rodentia</taxon>
        <taxon>Myomorpha</taxon>
        <taxon>Muroidea</taxon>
        <taxon>Muridae</taxon>
        <taxon>Murinae</taxon>
        <taxon>Mus</taxon>
        <taxon>Mus</taxon>
    </lineage>
</organism>
<comment type="function">
    <text evidence="3">May have an angiogenic function during early placental development. Binds to cell-surface heparan sulfate proteoglycans (HSPGs), and stimulates secretion of the proangiogenic factors VEGFA and TGFB from uterine dendritic cells and natural killer cells. Also induces endothelial tube formation in vitro.</text>
</comment>
<comment type="subcellular location">
    <subcellularLocation>
        <location evidence="4">Secreted</location>
    </subcellularLocation>
</comment>
<comment type="developmental stage">
    <text evidence="3">Expressed in placental trophoblast giant cells from 5.5 dpc onwards, with increased expression by 10.5 dpc (at protein level). Also detected on the decidua basalis at 10.5 dpc (at protein level).</text>
</comment>
<comment type="similarity">
    <text evidence="4">Belongs to the immunoglobulin superfamily. CEA family.</text>
</comment>
<accession>Q810J1</accession>
<accession>Q66JZ0</accession>
<name>PSG22_MOUSE</name>
<evidence type="ECO:0000255" key="1"/>
<evidence type="ECO:0000255" key="2">
    <source>
        <dbReference type="PROSITE-ProRule" id="PRU00114"/>
    </source>
</evidence>
<evidence type="ECO:0000269" key="3">
    <source>
    </source>
</evidence>
<evidence type="ECO:0000305" key="4"/>
<evidence type="ECO:0000312" key="5">
    <source>
        <dbReference type="EMBL" id="AAH50099.2"/>
    </source>
</evidence>
<evidence type="ECO:0000312" key="6">
    <source>
        <dbReference type="EMBL" id="AAH80694.1"/>
    </source>
</evidence>
<evidence type="ECO:0000312" key="7">
    <source>
        <dbReference type="MGI" id="MGI:1891354"/>
    </source>
</evidence>
<evidence type="ECO:0000312" key="8">
    <source>
        <dbReference type="Proteomes" id="UP000000589"/>
    </source>
</evidence>
<gene>
    <name evidence="7" type="primary">Psg22</name>
</gene>
<sequence length="475" mass="53225">MEVSSELLSNGWTSWQRVLLTASLLTCWLLPITAGVTIESVPPKLVEGENVLLRVDNLPENLRVFVWYRGVTDMSLGIALYSLDYSTSVTGPKHSGRETLYRNGSLWIQNVTREDTGYYTLQTISKNGKVVSNTSIFLQVNSSLFICGRPSPPALLTIESVPASVAEGGSVLLLVHSLPDNLQSLLWYKGLTVFNKVEIARHRTVKNSSEMGPAYSGREIVYSNGSLLLQNVTWEDTGFYTLQIVNRYWKMELAHIYLQVDTSLSSCCDDFNSVQLRINPVPPHAAEGERVLLQVHNLPEDVQTFLWYKGVYSTQSFKITEYSIVTESLINGYAHSGREILFINGSLLLQDVTEKDSGFYTLVTIDSNVKVETAHVQVNVNKLVTQPVMRVTDSTVRIQGSVVFTCFSDNTGVSIRWLFNNQNLQLTERMTLSPSKCQLRIHTVRKEDAGEYQCEAFNPVSSKTSLPVRLTVMNE</sequence>